<sequence>MLVIHQRLPARSPRWDEELHLTYEARSKSRLRCFAASGEEVGLFLERGQPPLADGDCLEARDGRLVRVVARSERLLHVTCASPLELTRAAYHLGNRHVALQVGDGWLRLLDDYVLKAMLEQLGATVEAIEAPFQPEHGAYGGGHHHSHHGEAEFNYAPRLHQFGVRR</sequence>
<evidence type="ECO:0000255" key="1">
    <source>
        <dbReference type="HAMAP-Rule" id="MF_00822"/>
    </source>
</evidence>
<protein>
    <recommendedName>
        <fullName evidence="1">Urease accessory protein UreE</fullName>
    </recommendedName>
</protein>
<proteinExistence type="inferred from homology"/>
<keyword id="KW-0143">Chaperone</keyword>
<keyword id="KW-0963">Cytoplasm</keyword>
<keyword id="KW-0533">Nickel</keyword>
<comment type="function">
    <text evidence="1">Involved in urease metallocenter assembly. Binds nickel. Probably functions as a nickel donor during metallocenter assembly.</text>
</comment>
<comment type="subcellular location">
    <subcellularLocation>
        <location evidence="1">Cytoplasm</location>
    </subcellularLocation>
</comment>
<comment type="similarity">
    <text evidence="1">Belongs to the UreE family.</text>
</comment>
<accession>B7V1V4</accession>
<dbReference type="EMBL" id="FM209186">
    <property type="protein sequence ID" value="CAW30031.1"/>
    <property type="molecule type" value="Genomic_DNA"/>
</dbReference>
<dbReference type="RefSeq" id="WP_003095526.1">
    <property type="nucleotide sequence ID" value="NC_011770.1"/>
</dbReference>
<dbReference type="SMR" id="B7V1V4"/>
<dbReference type="KEGG" id="pag:PLES_52771"/>
<dbReference type="HOGENOM" id="CLU_093757_2_0_6"/>
<dbReference type="GO" id="GO:0005737">
    <property type="term" value="C:cytoplasm"/>
    <property type="evidence" value="ECO:0007669"/>
    <property type="project" value="UniProtKB-SubCell"/>
</dbReference>
<dbReference type="GO" id="GO:0016151">
    <property type="term" value="F:nickel cation binding"/>
    <property type="evidence" value="ECO:0007669"/>
    <property type="project" value="UniProtKB-UniRule"/>
</dbReference>
<dbReference type="GO" id="GO:0051082">
    <property type="term" value="F:unfolded protein binding"/>
    <property type="evidence" value="ECO:0007669"/>
    <property type="project" value="UniProtKB-UniRule"/>
</dbReference>
<dbReference type="GO" id="GO:0006457">
    <property type="term" value="P:protein folding"/>
    <property type="evidence" value="ECO:0007669"/>
    <property type="project" value="InterPro"/>
</dbReference>
<dbReference type="GO" id="GO:0065003">
    <property type="term" value="P:protein-containing complex assembly"/>
    <property type="evidence" value="ECO:0007669"/>
    <property type="project" value="InterPro"/>
</dbReference>
<dbReference type="GO" id="GO:0019627">
    <property type="term" value="P:urea metabolic process"/>
    <property type="evidence" value="ECO:0007669"/>
    <property type="project" value="InterPro"/>
</dbReference>
<dbReference type="CDD" id="cd00571">
    <property type="entry name" value="UreE"/>
    <property type="match status" value="1"/>
</dbReference>
<dbReference type="Gene3D" id="2.60.260.20">
    <property type="entry name" value="Urease metallochaperone UreE, N-terminal domain"/>
    <property type="match status" value="1"/>
</dbReference>
<dbReference type="Gene3D" id="3.30.70.790">
    <property type="entry name" value="UreE, C-terminal domain"/>
    <property type="match status" value="1"/>
</dbReference>
<dbReference type="HAMAP" id="MF_00822">
    <property type="entry name" value="UreE"/>
    <property type="match status" value="1"/>
</dbReference>
<dbReference type="InterPro" id="IPR012406">
    <property type="entry name" value="UreE"/>
</dbReference>
<dbReference type="InterPro" id="IPR007864">
    <property type="entry name" value="UreE_C_dom"/>
</dbReference>
<dbReference type="InterPro" id="IPR004029">
    <property type="entry name" value="UreE_N"/>
</dbReference>
<dbReference type="InterPro" id="IPR036118">
    <property type="entry name" value="UreE_N_sf"/>
</dbReference>
<dbReference type="NCBIfam" id="NF009751">
    <property type="entry name" value="PRK13261.1-1"/>
    <property type="match status" value="1"/>
</dbReference>
<dbReference type="NCBIfam" id="NF009753">
    <property type="entry name" value="PRK13261.1-5"/>
    <property type="match status" value="1"/>
</dbReference>
<dbReference type="Pfam" id="PF05194">
    <property type="entry name" value="UreE_C"/>
    <property type="match status" value="1"/>
</dbReference>
<dbReference type="Pfam" id="PF02814">
    <property type="entry name" value="UreE_N"/>
    <property type="match status" value="1"/>
</dbReference>
<dbReference type="PIRSF" id="PIRSF036402">
    <property type="entry name" value="Ureas_acces_UreE"/>
    <property type="match status" value="1"/>
</dbReference>
<dbReference type="SMART" id="SM00988">
    <property type="entry name" value="UreE_N"/>
    <property type="match status" value="1"/>
</dbReference>
<dbReference type="SUPFAM" id="SSF69737">
    <property type="entry name" value="Urease metallochaperone UreE, C-terminal domain"/>
    <property type="match status" value="1"/>
</dbReference>
<dbReference type="SUPFAM" id="SSF69287">
    <property type="entry name" value="Urease metallochaperone UreE, N-terminal domain"/>
    <property type="match status" value="1"/>
</dbReference>
<feature type="chain" id="PRO_1000197446" description="Urease accessory protein UreE">
    <location>
        <begin position="1"/>
        <end position="167"/>
    </location>
</feature>
<organism>
    <name type="scientific">Pseudomonas aeruginosa (strain LESB58)</name>
    <dbReference type="NCBI Taxonomy" id="557722"/>
    <lineage>
        <taxon>Bacteria</taxon>
        <taxon>Pseudomonadati</taxon>
        <taxon>Pseudomonadota</taxon>
        <taxon>Gammaproteobacteria</taxon>
        <taxon>Pseudomonadales</taxon>
        <taxon>Pseudomonadaceae</taxon>
        <taxon>Pseudomonas</taxon>
    </lineage>
</organism>
<reference key="1">
    <citation type="journal article" date="2009" name="Genome Res.">
        <title>Newly introduced genomic prophage islands are critical determinants of in vivo competitiveness in the Liverpool epidemic strain of Pseudomonas aeruginosa.</title>
        <authorList>
            <person name="Winstanley C."/>
            <person name="Langille M.G.I."/>
            <person name="Fothergill J.L."/>
            <person name="Kukavica-Ibrulj I."/>
            <person name="Paradis-Bleau C."/>
            <person name="Sanschagrin F."/>
            <person name="Thomson N.R."/>
            <person name="Winsor G.L."/>
            <person name="Quail M.A."/>
            <person name="Lennard N."/>
            <person name="Bignell A."/>
            <person name="Clarke L."/>
            <person name="Seeger K."/>
            <person name="Saunders D."/>
            <person name="Harris D."/>
            <person name="Parkhill J."/>
            <person name="Hancock R.E.W."/>
            <person name="Brinkman F.S.L."/>
            <person name="Levesque R.C."/>
        </authorList>
    </citation>
    <scope>NUCLEOTIDE SEQUENCE [LARGE SCALE GENOMIC DNA]</scope>
    <source>
        <strain>LESB58</strain>
    </source>
</reference>
<gene>
    <name evidence="1" type="primary">ureE</name>
    <name type="ordered locus">PLES_52771</name>
</gene>
<name>UREE_PSEA8</name>